<feature type="chain" id="PRO_1000090096" description="Glutamate--tRNA ligase">
    <location>
        <begin position="1"/>
        <end position="507"/>
    </location>
</feature>
<feature type="short sequence motif" description="'HIGH' region" evidence="1">
    <location>
        <begin position="14"/>
        <end position="24"/>
    </location>
</feature>
<feature type="short sequence motif" description="'KMSKS' region" evidence="1">
    <location>
        <begin position="262"/>
        <end position="266"/>
    </location>
</feature>
<feature type="binding site" evidence="1">
    <location>
        <position position="265"/>
    </location>
    <ligand>
        <name>ATP</name>
        <dbReference type="ChEBI" id="CHEBI:30616"/>
    </ligand>
</feature>
<dbReference type="EC" id="6.1.1.17" evidence="1"/>
<dbReference type="EMBL" id="AP009380">
    <property type="protein sequence ID" value="BAG33062.1"/>
    <property type="molecule type" value="Genomic_DNA"/>
</dbReference>
<dbReference type="RefSeq" id="WP_012457588.1">
    <property type="nucleotide sequence ID" value="NC_010729.1"/>
</dbReference>
<dbReference type="SMR" id="B2RI67"/>
<dbReference type="GeneID" id="29255772"/>
<dbReference type="KEGG" id="pgn:PGN_0543"/>
<dbReference type="eggNOG" id="COG0008">
    <property type="taxonomic scope" value="Bacteria"/>
</dbReference>
<dbReference type="HOGENOM" id="CLU_015768_6_3_10"/>
<dbReference type="OrthoDB" id="9807503at2"/>
<dbReference type="BioCyc" id="PGIN431947:G1G2V-588-MONOMER"/>
<dbReference type="Proteomes" id="UP000008842">
    <property type="component" value="Chromosome"/>
</dbReference>
<dbReference type="GO" id="GO:0005829">
    <property type="term" value="C:cytosol"/>
    <property type="evidence" value="ECO:0007669"/>
    <property type="project" value="TreeGrafter"/>
</dbReference>
<dbReference type="GO" id="GO:0005524">
    <property type="term" value="F:ATP binding"/>
    <property type="evidence" value="ECO:0007669"/>
    <property type="project" value="UniProtKB-UniRule"/>
</dbReference>
<dbReference type="GO" id="GO:0004818">
    <property type="term" value="F:glutamate-tRNA ligase activity"/>
    <property type="evidence" value="ECO:0007669"/>
    <property type="project" value="UniProtKB-UniRule"/>
</dbReference>
<dbReference type="GO" id="GO:0000049">
    <property type="term" value="F:tRNA binding"/>
    <property type="evidence" value="ECO:0007669"/>
    <property type="project" value="InterPro"/>
</dbReference>
<dbReference type="GO" id="GO:0008270">
    <property type="term" value="F:zinc ion binding"/>
    <property type="evidence" value="ECO:0007669"/>
    <property type="project" value="InterPro"/>
</dbReference>
<dbReference type="GO" id="GO:0006424">
    <property type="term" value="P:glutamyl-tRNA aminoacylation"/>
    <property type="evidence" value="ECO:0007669"/>
    <property type="project" value="UniProtKB-UniRule"/>
</dbReference>
<dbReference type="CDD" id="cd00808">
    <property type="entry name" value="GluRS_core"/>
    <property type="match status" value="1"/>
</dbReference>
<dbReference type="FunFam" id="3.40.50.620:FF:000127">
    <property type="entry name" value="Glutamate--tRNA ligase"/>
    <property type="match status" value="1"/>
</dbReference>
<dbReference type="Gene3D" id="1.10.10.350">
    <property type="match status" value="1"/>
</dbReference>
<dbReference type="Gene3D" id="1.10.1160.10">
    <property type="entry name" value="Glutamyl-trna Synthetase, Domain 2"/>
    <property type="match status" value="1"/>
</dbReference>
<dbReference type="Gene3D" id="3.90.800.10">
    <property type="entry name" value="Glutamyl-tRNA Synthetase, Domain 3"/>
    <property type="match status" value="1"/>
</dbReference>
<dbReference type="Gene3D" id="3.40.50.620">
    <property type="entry name" value="HUPs"/>
    <property type="match status" value="1"/>
</dbReference>
<dbReference type="HAMAP" id="MF_00022">
    <property type="entry name" value="Glu_tRNA_synth_type1"/>
    <property type="match status" value="1"/>
</dbReference>
<dbReference type="InterPro" id="IPR045462">
    <property type="entry name" value="aa-tRNA-synth_I_cd-bd"/>
</dbReference>
<dbReference type="InterPro" id="IPR020751">
    <property type="entry name" value="aa-tRNA-synth_I_codon-bd_sub2"/>
</dbReference>
<dbReference type="InterPro" id="IPR001412">
    <property type="entry name" value="aa-tRNA-synth_I_CS"/>
</dbReference>
<dbReference type="InterPro" id="IPR008925">
    <property type="entry name" value="aa_tRNA-synth_I_cd-bd_sf"/>
</dbReference>
<dbReference type="InterPro" id="IPR004527">
    <property type="entry name" value="Glu-tRNA-ligase_bac/mito"/>
</dbReference>
<dbReference type="InterPro" id="IPR000924">
    <property type="entry name" value="Glu/Gln-tRNA-synth"/>
</dbReference>
<dbReference type="InterPro" id="IPR020058">
    <property type="entry name" value="Glu/Gln-tRNA-synth_Ib_cat-dom"/>
</dbReference>
<dbReference type="InterPro" id="IPR020061">
    <property type="entry name" value="Glu_tRNA_lig_a-bdl"/>
</dbReference>
<dbReference type="InterPro" id="IPR049940">
    <property type="entry name" value="GluQ/Sye"/>
</dbReference>
<dbReference type="InterPro" id="IPR033910">
    <property type="entry name" value="GluRS_core"/>
</dbReference>
<dbReference type="InterPro" id="IPR014729">
    <property type="entry name" value="Rossmann-like_a/b/a_fold"/>
</dbReference>
<dbReference type="NCBIfam" id="TIGR00464">
    <property type="entry name" value="gltX_bact"/>
    <property type="match status" value="1"/>
</dbReference>
<dbReference type="PANTHER" id="PTHR43311">
    <property type="entry name" value="GLUTAMATE--TRNA LIGASE"/>
    <property type="match status" value="1"/>
</dbReference>
<dbReference type="PANTHER" id="PTHR43311:SF2">
    <property type="entry name" value="GLUTAMATE--TRNA LIGASE, MITOCHONDRIAL-RELATED"/>
    <property type="match status" value="1"/>
</dbReference>
<dbReference type="Pfam" id="PF19269">
    <property type="entry name" value="Anticodon_2"/>
    <property type="match status" value="1"/>
</dbReference>
<dbReference type="Pfam" id="PF00749">
    <property type="entry name" value="tRNA-synt_1c"/>
    <property type="match status" value="1"/>
</dbReference>
<dbReference type="PRINTS" id="PR00987">
    <property type="entry name" value="TRNASYNTHGLU"/>
</dbReference>
<dbReference type="SUPFAM" id="SSF48163">
    <property type="entry name" value="An anticodon-binding domain of class I aminoacyl-tRNA synthetases"/>
    <property type="match status" value="1"/>
</dbReference>
<dbReference type="SUPFAM" id="SSF52374">
    <property type="entry name" value="Nucleotidylyl transferase"/>
    <property type="match status" value="1"/>
</dbReference>
<dbReference type="PROSITE" id="PS00178">
    <property type="entry name" value="AA_TRNA_LIGASE_I"/>
    <property type="match status" value="1"/>
</dbReference>
<reference key="1">
    <citation type="journal article" date="2008" name="DNA Res.">
        <title>Determination of the genome sequence of Porphyromonas gingivalis strain ATCC 33277 and genomic comparison with strain W83 revealed extensive genome rearrangements in P. gingivalis.</title>
        <authorList>
            <person name="Naito M."/>
            <person name="Hirakawa H."/>
            <person name="Yamashita A."/>
            <person name="Ohara N."/>
            <person name="Shoji M."/>
            <person name="Yukitake H."/>
            <person name="Nakayama K."/>
            <person name="Toh H."/>
            <person name="Yoshimura F."/>
            <person name="Kuhara S."/>
            <person name="Hattori M."/>
            <person name="Hayashi T."/>
            <person name="Nakayama K."/>
        </authorList>
    </citation>
    <scope>NUCLEOTIDE SEQUENCE [LARGE SCALE GENOMIC DNA]</scope>
    <source>
        <strain>ATCC 33277 / DSM 20709 / CIP 103683 / JCM 12257 / NCTC 11834 / 2561</strain>
    </source>
</reference>
<protein>
    <recommendedName>
        <fullName evidence="1">Glutamate--tRNA ligase</fullName>
        <ecNumber evidence="1">6.1.1.17</ecNumber>
    </recommendedName>
    <alternativeName>
        <fullName evidence="1">Glutamyl-tRNA synthetase</fullName>
        <shortName evidence="1">GluRS</shortName>
    </alternativeName>
</protein>
<gene>
    <name evidence="1" type="primary">gltX</name>
    <name type="ordered locus">PGN_0543</name>
</gene>
<organism>
    <name type="scientific">Porphyromonas gingivalis (strain ATCC 33277 / DSM 20709 / CIP 103683 / JCM 12257 / NCTC 11834 / 2561)</name>
    <dbReference type="NCBI Taxonomy" id="431947"/>
    <lineage>
        <taxon>Bacteria</taxon>
        <taxon>Pseudomonadati</taxon>
        <taxon>Bacteroidota</taxon>
        <taxon>Bacteroidia</taxon>
        <taxon>Bacteroidales</taxon>
        <taxon>Porphyromonadaceae</taxon>
        <taxon>Porphyromonas</taxon>
    </lineage>
</organism>
<sequence>MDTINRRIRVRFAPSPTGPLHIGGVRTALYNYLFARQHGGDMILRIEDTDSNRFVPGAEAYIIEALEWLGIKFDEGVGYGGRFGPYRQSERRDIYRTYVRQLLDSGRAYIAFDTPEELEARRAEVPNFQYDATTRGQMRNSLTLPAEEVERLVAEGTQYVVRFLVEPNVDVEVNDLIRGRVVIDSSILDDKVLYKSADDLPTYHLANIVDDHLMEVSHVIRGEEWLPSAPLHVLLYRAFGWEDTMPRFAHLALLLKPEGNGKLSKRDGDRLGFPVFPLEWKDPQTGDISKGYRESGYLPEAVVNFLALLGWNPGNDQDVMSMDELIRLFDIEKCSKAGAKFDYEKGRWFNHQYIQRKDNAELAELFRPILRENGVVATDEKTAHVISLVKERVNFIGELWEQAGFFFIAPLSYDEKTVKKRWKEDTAKQLGELAELLDSHRSFAAEATEPTVKNWIETNGYHLGNIMNATRLALVGESKGPHIFDIMEVLGREETVGRIRRAIEILG</sequence>
<evidence type="ECO:0000255" key="1">
    <source>
        <dbReference type="HAMAP-Rule" id="MF_00022"/>
    </source>
</evidence>
<keyword id="KW-0030">Aminoacyl-tRNA synthetase</keyword>
<keyword id="KW-0067">ATP-binding</keyword>
<keyword id="KW-0963">Cytoplasm</keyword>
<keyword id="KW-0436">Ligase</keyword>
<keyword id="KW-0547">Nucleotide-binding</keyword>
<keyword id="KW-0648">Protein biosynthesis</keyword>
<accession>B2RI67</accession>
<name>SYE_PORG3</name>
<proteinExistence type="inferred from homology"/>
<comment type="function">
    <text evidence="1">Catalyzes the attachment of glutamate to tRNA(Glu) in a two-step reaction: glutamate is first activated by ATP to form Glu-AMP and then transferred to the acceptor end of tRNA(Glu).</text>
</comment>
<comment type="catalytic activity">
    <reaction evidence="1">
        <text>tRNA(Glu) + L-glutamate + ATP = L-glutamyl-tRNA(Glu) + AMP + diphosphate</text>
        <dbReference type="Rhea" id="RHEA:23540"/>
        <dbReference type="Rhea" id="RHEA-COMP:9663"/>
        <dbReference type="Rhea" id="RHEA-COMP:9680"/>
        <dbReference type="ChEBI" id="CHEBI:29985"/>
        <dbReference type="ChEBI" id="CHEBI:30616"/>
        <dbReference type="ChEBI" id="CHEBI:33019"/>
        <dbReference type="ChEBI" id="CHEBI:78442"/>
        <dbReference type="ChEBI" id="CHEBI:78520"/>
        <dbReference type="ChEBI" id="CHEBI:456215"/>
        <dbReference type="EC" id="6.1.1.17"/>
    </reaction>
</comment>
<comment type="subunit">
    <text evidence="1">Monomer.</text>
</comment>
<comment type="subcellular location">
    <subcellularLocation>
        <location evidence="1">Cytoplasm</location>
    </subcellularLocation>
</comment>
<comment type="similarity">
    <text evidence="1">Belongs to the class-I aminoacyl-tRNA synthetase family. Glutamate--tRNA ligase type 1 subfamily.</text>
</comment>